<proteinExistence type="inferred from homology"/>
<reference key="1">
    <citation type="journal article" date="2006" name="J. Bacteriol.">
        <title>Pathogenomic sequence analysis of Bacillus cereus and Bacillus thuringiensis isolates closely related to Bacillus anthracis.</title>
        <authorList>
            <person name="Han C.S."/>
            <person name="Xie G."/>
            <person name="Challacombe J.F."/>
            <person name="Altherr M.R."/>
            <person name="Bhotika S.S."/>
            <person name="Bruce D."/>
            <person name="Campbell C.S."/>
            <person name="Campbell M.L."/>
            <person name="Chen J."/>
            <person name="Chertkov O."/>
            <person name="Cleland C."/>
            <person name="Dimitrijevic M."/>
            <person name="Doggett N.A."/>
            <person name="Fawcett J.J."/>
            <person name="Glavina T."/>
            <person name="Goodwin L.A."/>
            <person name="Hill K.K."/>
            <person name="Hitchcock P."/>
            <person name="Jackson P.J."/>
            <person name="Keim P."/>
            <person name="Kewalramani A.R."/>
            <person name="Longmire J."/>
            <person name="Lucas S."/>
            <person name="Malfatti S."/>
            <person name="McMurry K."/>
            <person name="Meincke L.J."/>
            <person name="Misra M."/>
            <person name="Moseman B.L."/>
            <person name="Mundt M."/>
            <person name="Munk A.C."/>
            <person name="Okinaka R.T."/>
            <person name="Parson-Quintana B."/>
            <person name="Reilly L.P."/>
            <person name="Richardson P."/>
            <person name="Robinson D.L."/>
            <person name="Rubin E."/>
            <person name="Saunders E."/>
            <person name="Tapia R."/>
            <person name="Tesmer J.G."/>
            <person name="Thayer N."/>
            <person name="Thompson L.S."/>
            <person name="Tice H."/>
            <person name="Ticknor L.O."/>
            <person name="Wills P.L."/>
            <person name="Brettin T.S."/>
            <person name="Gilna P."/>
        </authorList>
    </citation>
    <scope>NUCLEOTIDE SEQUENCE [LARGE SCALE GENOMIC DNA]</scope>
    <source>
        <strain>97-27</strain>
    </source>
</reference>
<feature type="chain" id="PRO_0000107531" description="Acetate kinase">
    <location>
        <begin position="1"/>
        <end position="397"/>
    </location>
</feature>
<feature type="active site" description="Proton donor/acceptor" evidence="1">
    <location>
        <position position="146"/>
    </location>
</feature>
<feature type="binding site" evidence="1">
    <location>
        <position position="8"/>
    </location>
    <ligand>
        <name>Mg(2+)</name>
        <dbReference type="ChEBI" id="CHEBI:18420"/>
    </ligand>
</feature>
<feature type="binding site" evidence="1">
    <location>
        <position position="15"/>
    </location>
    <ligand>
        <name>ATP</name>
        <dbReference type="ChEBI" id="CHEBI:30616"/>
    </ligand>
</feature>
<feature type="binding site" evidence="1">
    <location>
        <position position="89"/>
    </location>
    <ligand>
        <name>substrate</name>
    </ligand>
</feature>
<feature type="binding site" evidence="1">
    <location>
        <begin position="206"/>
        <end position="210"/>
    </location>
    <ligand>
        <name>ATP</name>
        <dbReference type="ChEBI" id="CHEBI:30616"/>
    </ligand>
</feature>
<feature type="binding site" evidence="1">
    <location>
        <begin position="281"/>
        <end position="283"/>
    </location>
    <ligand>
        <name>ATP</name>
        <dbReference type="ChEBI" id="CHEBI:30616"/>
    </ligand>
</feature>
<feature type="binding site" evidence="1">
    <location>
        <begin position="329"/>
        <end position="333"/>
    </location>
    <ligand>
        <name>ATP</name>
        <dbReference type="ChEBI" id="CHEBI:30616"/>
    </ligand>
</feature>
<feature type="binding site" evidence="1">
    <location>
        <position position="382"/>
    </location>
    <ligand>
        <name>Mg(2+)</name>
        <dbReference type="ChEBI" id="CHEBI:18420"/>
    </ligand>
</feature>
<feature type="site" description="Transition state stabilizer" evidence="1">
    <location>
        <position position="178"/>
    </location>
</feature>
<feature type="site" description="Transition state stabilizer" evidence="1">
    <location>
        <position position="239"/>
    </location>
</feature>
<organism>
    <name type="scientific">Bacillus thuringiensis subsp. konkukian (strain 97-27)</name>
    <dbReference type="NCBI Taxonomy" id="281309"/>
    <lineage>
        <taxon>Bacteria</taxon>
        <taxon>Bacillati</taxon>
        <taxon>Bacillota</taxon>
        <taxon>Bacilli</taxon>
        <taxon>Bacillales</taxon>
        <taxon>Bacillaceae</taxon>
        <taxon>Bacillus</taxon>
        <taxon>Bacillus cereus group</taxon>
    </lineage>
</organism>
<gene>
    <name evidence="1" type="primary">ackA</name>
    <name type="ordered locus">BT9727_4371</name>
</gene>
<dbReference type="EC" id="2.7.2.1" evidence="1"/>
<dbReference type="EMBL" id="AE017355">
    <property type="protein sequence ID" value="AAT63581.1"/>
    <property type="molecule type" value="Genomic_DNA"/>
</dbReference>
<dbReference type="RefSeq" id="WP_000034578.1">
    <property type="nucleotide sequence ID" value="NC_005957.1"/>
</dbReference>
<dbReference type="RefSeq" id="YP_038686.1">
    <property type="nucleotide sequence ID" value="NC_005957.1"/>
</dbReference>
<dbReference type="SMR" id="Q6HCP0"/>
<dbReference type="KEGG" id="btk:BT9727_4371"/>
<dbReference type="PATRIC" id="fig|281309.8.peg.4659"/>
<dbReference type="HOGENOM" id="CLU_020352_0_1_9"/>
<dbReference type="UniPathway" id="UPA00340">
    <property type="reaction ID" value="UER00458"/>
</dbReference>
<dbReference type="Proteomes" id="UP000001301">
    <property type="component" value="Chromosome"/>
</dbReference>
<dbReference type="GO" id="GO:0005737">
    <property type="term" value="C:cytoplasm"/>
    <property type="evidence" value="ECO:0007669"/>
    <property type="project" value="UniProtKB-SubCell"/>
</dbReference>
<dbReference type="GO" id="GO:0008776">
    <property type="term" value="F:acetate kinase activity"/>
    <property type="evidence" value="ECO:0007669"/>
    <property type="project" value="UniProtKB-UniRule"/>
</dbReference>
<dbReference type="GO" id="GO:0005524">
    <property type="term" value="F:ATP binding"/>
    <property type="evidence" value="ECO:0007669"/>
    <property type="project" value="UniProtKB-KW"/>
</dbReference>
<dbReference type="GO" id="GO:0000287">
    <property type="term" value="F:magnesium ion binding"/>
    <property type="evidence" value="ECO:0007669"/>
    <property type="project" value="UniProtKB-UniRule"/>
</dbReference>
<dbReference type="GO" id="GO:0006083">
    <property type="term" value="P:acetate metabolic process"/>
    <property type="evidence" value="ECO:0007669"/>
    <property type="project" value="TreeGrafter"/>
</dbReference>
<dbReference type="GO" id="GO:0006085">
    <property type="term" value="P:acetyl-CoA biosynthetic process"/>
    <property type="evidence" value="ECO:0007669"/>
    <property type="project" value="UniProtKB-UniRule"/>
</dbReference>
<dbReference type="CDD" id="cd24010">
    <property type="entry name" value="ASKHA_NBD_AcK_PK"/>
    <property type="match status" value="1"/>
</dbReference>
<dbReference type="Gene3D" id="3.30.420.40">
    <property type="match status" value="2"/>
</dbReference>
<dbReference type="HAMAP" id="MF_00020">
    <property type="entry name" value="Acetate_kinase"/>
    <property type="match status" value="1"/>
</dbReference>
<dbReference type="InterPro" id="IPR004372">
    <property type="entry name" value="Ac/propionate_kinase"/>
</dbReference>
<dbReference type="InterPro" id="IPR000890">
    <property type="entry name" value="Aliphatic_acid_kin_short-chain"/>
</dbReference>
<dbReference type="InterPro" id="IPR023865">
    <property type="entry name" value="Aliphatic_acid_kinase_CS"/>
</dbReference>
<dbReference type="InterPro" id="IPR043129">
    <property type="entry name" value="ATPase_NBD"/>
</dbReference>
<dbReference type="NCBIfam" id="TIGR00016">
    <property type="entry name" value="ackA"/>
    <property type="match status" value="1"/>
</dbReference>
<dbReference type="PANTHER" id="PTHR21060">
    <property type="entry name" value="ACETATE KINASE"/>
    <property type="match status" value="1"/>
</dbReference>
<dbReference type="PANTHER" id="PTHR21060:SF15">
    <property type="entry name" value="ACETATE KINASE-RELATED"/>
    <property type="match status" value="1"/>
</dbReference>
<dbReference type="Pfam" id="PF00871">
    <property type="entry name" value="Acetate_kinase"/>
    <property type="match status" value="1"/>
</dbReference>
<dbReference type="PIRSF" id="PIRSF000722">
    <property type="entry name" value="Acetate_prop_kin"/>
    <property type="match status" value="1"/>
</dbReference>
<dbReference type="PRINTS" id="PR00471">
    <property type="entry name" value="ACETATEKNASE"/>
</dbReference>
<dbReference type="SUPFAM" id="SSF53067">
    <property type="entry name" value="Actin-like ATPase domain"/>
    <property type="match status" value="2"/>
</dbReference>
<dbReference type="PROSITE" id="PS01075">
    <property type="entry name" value="ACETATE_KINASE_1"/>
    <property type="match status" value="1"/>
</dbReference>
<dbReference type="PROSITE" id="PS01076">
    <property type="entry name" value="ACETATE_KINASE_2"/>
    <property type="match status" value="1"/>
</dbReference>
<name>ACKA_BACHK</name>
<evidence type="ECO:0000255" key="1">
    <source>
        <dbReference type="HAMAP-Rule" id="MF_00020"/>
    </source>
</evidence>
<sequence length="397" mass="43263">MSKIIAINAGSSSLKFQLFEMPSETVLTKGLVERIGLEDSIFTITVDGEKQKEITNIPDHAVAVNMLLKKLTENGIVKSLDEIGGIGHRVVHGGEKFADSVLITDEVLADIEELSDLAPLHNPANVVGIKAFQEVLPNVPAVAVFDTAFHQTMPESAFLYSLPYEYYEKFGIRKYGFHGTSHKYVTERAAELLGRPLESLSLLSCHLGNGASIAAVEGGKSIDTSMGFTPLAGVTMGTRSGNIDPALIPYIMEKTGQTVEEVVSVLNKKSGMLGLTGYSSDLRDIIAKEEEGDHRAKVALDVFVSRIHKYIGSYTARMKGVDAIIFTAGVGENSAIIRERVLEGLEYMGVYFDAKRNNVFGEEAFINFPHSPVKIIVIPTDEEVMIARDVLRLGNID</sequence>
<keyword id="KW-0067">ATP-binding</keyword>
<keyword id="KW-0963">Cytoplasm</keyword>
<keyword id="KW-0418">Kinase</keyword>
<keyword id="KW-0460">Magnesium</keyword>
<keyword id="KW-0479">Metal-binding</keyword>
<keyword id="KW-0547">Nucleotide-binding</keyword>
<keyword id="KW-0808">Transferase</keyword>
<accession>Q6HCP0</accession>
<comment type="function">
    <text evidence="1">Catalyzes the formation of acetyl phosphate from acetate and ATP. Can also catalyze the reverse reaction.</text>
</comment>
<comment type="catalytic activity">
    <reaction evidence="1">
        <text>acetate + ATP = acetyl phosphate + ADP</text>
        <dbReference type="Rhea" id="RHEA:11352"/>
        <dbReference type="ChEBI" id="CHEBI:22191"/>
        <dbReference type="ChEBI" id="CHEBI:30089"/>
        <dbReference type="ChEBI" id="CHEBI:30616"/>
        <dbReference type="ChEBI" id="CHEBI:456216"/>
        <dbReference type="EC" id="2.7.2.1"/>
    </reaction>
</comment>
<comment type="cofactor">
    <cofactor evidence="1">
        <name>Mg(2+)</name>
        <dbReference type="ChEBI" id="CHEBI:18420"/>
    </cofactor>
    <cofactor evidence="1">
        <name>Mn(2+)</name>
        <dbReference type="ChEBI" id="CHEBI:29035"/>
    </cofactor>
    <text evidence="1">Mg(2+). Can also accept Mn(2+).</text>
</comment>
<comment type="pathway">
    <text evidence="1">Metabolic intermediate biosynthesis; acetyl-CoA biosynthesis; acetyl-CoA from acetate: step 1/2.</text>
</comment>
<comment type="subunit">
    <text evidence="1">Homodimer.</text>
</comment>
<comment type="subcellular location">
    <subcellularLocation>
        <location evidence="1">Cytoplasm</location>
    </subcellularLocation>
</comment>
<comment type="similarity">
    <text evidence="1">Belongs to the acetokinase family.</text>
</comment>
<protein>
    <recommendedName>
        <fullName evidence="1">Acetate kinase</fullName>
        <ecNumber evidence="1">2.7.2.1</ecNumber>
    </recommendedName>
    <alternativeName>
        <fullName evidence="1">Acetokinase</fullName>
    </alternativeName>
</protein>